<dbReference type="EMBL" id="AF221110">
    <property type="protein sequence ID" value="AAF59841.1"/>
    <property type="molecule type" value="mRNA"/>
</dbReference>
<dbReference type="EMBL" id="AE014296">
    <property type="protein sequence ID" value="AAF50074.1"/>
    <property type="molecule type" value="Genomic_DNA"/>
</dbReference>
<dbReference type="EMBL" id="AY075382">
    <property type="protein sequence ID" value="AAL68220.1"/>
    <property type="status" value="ALT_SEQ"/>
    <property type="molecule type" value="mRNA"/>
</dbReference>
<dbReference type="EMBL" id="BT015975">
    <property type="protein sequence ID" value="AAV36860.1"/>
    <property type="molecule type" value="mRNA"/>
</dbReference>
<dbReference type="EMBL" id="BT057991">
    <property type="protein sequence ID" value="ACM16701.1"/>
    <property type="molecule type" value="mRNA"/>
</dbReference>
<dbReference type="RefSeq" id="NP_648456.2">
    <property type="nucleotide sequence ID" value="NM_140199.4"/>
</dbReference>
<dbReference type="RefSeq" id="NP_996043.2">
    <property type="nucleotide sequence ID" value="NM_206321.2"/>
</dbReference>
<dbReference type="SMR" id="Q9VTH4"/>
<dbReference type="BioGRID" id="64642">
    <property type="interactions" value="6"/>
</dbReference>
<dbReference type="FunCoup" id="Q9VTH4">
    <property type="interactions" value="98"/>
</dbReference>
<dbReference type="IntAct" id="Q9VTH4">
    <property type="interactions" value="5"/>
</dbReference>
<dbReference type="STRING" id="7227.FBpp0308940"/>
<dbReference type="PaxDb" id="7227-FBpp0075899"/>
<dbReference type="DNASU" id="39270"/>
<dbReference type="EnsemblMetazoa" id="FBtr0076168">
    <property type="protein sequence ID" value="FBpp0075899"/>
    <property type="gene ID" value="FBgn0041094"/>
</dbReference>
<dbReference type="EnsemblMetazoa" id="FBtr0339908">
    <property type="protein sequence ID" value="FBpp0308940"/>
    <property type="gene ID" value="FBgn0041094"/>
</dbReference>
<dbReference type="GeneID" id="39270"/>
<dbReference type="KEGG" id="dme:Dmel_CG7590"/>
<dbReference type="UCSC" id="CG7590-RA">
    <property type="organism name" value="d. melanogaster"/>
</dbReference>
<dbReference type="AGR" id="FB:FBgn0041094"/>
<dbReference type="CTD" id="39270"/>
<dbReference type="FlyBase" id="FBgn0041094">
    <property type="gene designation" value="scyl"/>
</dbReference>
<dbReference type="VEuPathDB" id="VectorBase:FBgn0041094"/>
<dbReference type="eggNOG" id="ENOG502R3EE">
    <property type="taxonomic scope" value="Eukaryota"/>
</dbReference>
<dbReference type="GeneTree" id="ENSGT00530000063652"/>
<dbReference type="HOGENOM" id="CLU_074668_1_0_1"/>
<dbReference type="InParanoid" id="Q9VTH4"/>
<dbReference type="OMA" id="MPGLWER"/>
<dbReference type="OrthoDB" id="10018535at2759"/>
<dbReference type="PhylomeDB" id="Q9VTH4"/>
<dbReference type="Reactome" id="R-DME-5628897">
    <property type="pathway name" value="TP53 Regulates Metabolic Genes"/>
</dbReference>
<dbReference type="SignaLink" id="Q9VTH4"/>
<dbReference type="BioGRID-ORCS" id="39270">
    <property type="hits" value="0 hits in 3 CRISPR screens"/>
</dbReference>
<dbReference type="ChiTaRS" id="scyl">
    <property type="organism name" value="fly"/>
</dbReference>
<dbReference type="GenomeRNAi" id="39270"/>
<dbReference type="PRO" id="PR:Q9VTH4"/>
<dbReference type="Proteomes" id="UP000000803">
    <property type="component" value="Chromosome 3L"/>
</dbReference>
<dbReference type="Bgee" id="FBgn0041094">
    <property type="expression patterns" value="Expressed in adult tracheocyte (Drosophila) in insect leg and 281 other cell types or tissues"/>
</dbReference>
<dbReference type="GO" id="GO:0005737">
    <property type="term" value="C:cytoplasm"/>
    <property type="evidence" value="ECO:0000250"/>
    <property type="project" value="UniProtKB"/>
</dbReference>
<dbReference type="GO" id="GO:0006915">
    <property type="term" value="P:apoptotic process"/>
    <property type="evidence" value="ECO:0000315"/>
    <property type="project" value="UniProtKB"/>
</dbReference>
<dbReference type="GO" id="GO:0008258">
    <property type="term" value="P:head involution"/>
    <property type="evidence" value="ECO:0000315"/>
    <property type="project" value="UniProtKB"/>
</dbReference>
<dbReference type="GO" id="GO:0045926">
    <property type="term" value="P:negative regulation of growth"/>
    <property type="evidence" value="ECO:0000316"/>
    <property type="project" value="FlyBase"/>
</dbReference>
<dbReference type="GO" id="GO:0009968">
    <property type="term" value="P:negative regulation of signal transduction"/>
    <property type="evidence" value="ECO:0007669"/>
    <property type="project" value="InterPro"/>
</dbReference>
<dbReference type="GO" id="GO:0032006">
    <property type="term" value="P:regulation of TOR signaling"/>
    <property type="evidence" value="ECO:0000315"/>
    <property type="project" value="UniProtKB"/>
</dbReference>
<dbReference type="GO" id="GO:0006979">
    <property type="term" value="P:response to oxidative stress"/>
    <property type="evidence" value="ECO:0000315"/>
    <property type="project" value="UniProtKB"/>
</dbReference>
<dbReference type="GO" id="GO:0019953">
    <property type="term" value="P:sexual reproduction"/>
    <property type="evidence" value="ECO:0000270"/>
    <property type="project" value="FlyBase"/>
</dbReference>
<dbReference type="FunFam" id="3.90.470.40:FF:000003">
    <property type="entry name" value="Charybde, isoform E"/>
    <property type="match status" value="1"/>
</dbReference>
<dbReference type="Gene3D" id="3.90.470.40">
    <property type="entry name" value="RTP801-like"/>
    <property type="match status" value="1"/>
</dbReference>
<dbReference type="InterPro" id="IPR012918">
    <property type="entry name" value="RTP801-like"/>
</dbReference>
<dbReference type="InterPro" id="IPR038281">
    <property type="entry name" value="RTP801-like_C_sf"/>
</dbReference>
<dbReference type="PANTHER" id="PTHR12478">
    <property type="entry name" value="DNA-DAMAGE-INDUCIBLE TRANSCRIPT 4 PROTEIN DDIT4"/>
    <property type="match status" value="1"/>
</dbReference>
<dbReference type="PANTHER" id="PTHR12478:SF16">
    <property type="entry name" value="PROTEIN CHARYBDE-RELATED"/>
    <property type="match status" value="1"/>
</dbReference>
<dbReference type="Pfam" id="PF07809">
    <property type="entry name" value="RTP801_C"/>
    <property type="match status" value="1"/>
</dbReference>
<accession>Q9VTH4</accession>
<accession>B9EQR6</accession>
<accession>Q5U1B7</accession>
<accession>Q8SY44</accession>
<accession>Q9NHN4</accession>
<feature type="chain" id="PRO_0000307211" description="Protein scylla">
    <location>
        <begin position="1"/>
        <end position="280"/>
    </location>
</feature>
<feature type="region of interest" description="Disordered" evidence="2">
    <location>
        <begin position="39"/>
        <end position="96"/>
    </location>
</feature>
<feature type="compositionally biased region" description="Low complexity" evidence="2">
    <location>
        <begin position="46"/>
        <end position="69"/>
    </location>
</feature>
<feature type="compositionally biased region" description="Low complexity" evidence="2">
    <location>
        <begin position="77"/>
        <end position="96"/>
    </location>
</feature>
<feature type="sequence conflict" description="In Ref. 4; AAV36860." evidence="6" ref="4">
    <original>K</original>
    <variation>E</variation>
    <location>
        <position position="21"/>
    </location>
</feature>
<feature type="sequence conflict" description="In Ref. 1; AAF59841." evidence="6" ref="1">
    <original>S</original>
    <variation>P</variation>
    <location>
        <position position="203"/>
    </location>
</feature>
<organism>
    <name type="scientific">Drosophila melanogaster</name>
    <name type="common">Fruit fly</name>
    <dbReference type="NCBI Taxonomy" id="7227"/>
    <lineage>
        <taxon>Eukaryota</taxon>
        <taxon>Metazoa</taxon>
        <taxon>Ecdysozoa</taxon>
        <taxon>Arthropoda</taxon>
        <taxon>Hexapoda</taxon>
        <taxon>Insecta</taxon>
        <taxon>Pterygota</taxon>
        <taxon>Neoptera</taxon>
        <taxon>Endopterygota</taxon>
        <taxon>Diptera</taxon>
        <taxon>Brachycera</taxon>
        <taxon>Muscomorpha</taxon>
        <taxon>Ephydroidea</taxon>
        <taxon>Drosophilidae</taxon>
        <taxon>Drosophila</taxon>
        <taxon>Sophophora</taxon>
    </lineage>
</organism>
<proteinExistence type="evidence at transcript level"/>
<evidence type="ECO:0000250" key="1"/>
<evidence type="ECO:0000256" key="2">
    <source>
        <dbReference type="SAM" id="MobiDB-lite"/>
    </source>
</evidence>
<evidence type="ECO:0000269" key="3">
    <source>
    </source>
</evidence>
<evidence type="ECO:0000269" key="4">
    <source>
    </source>
</evidence>
<evidence type="ECO:0000269" key="5">
    <source>
    </source>
</evidence>
<evidence type="ECO:0000305" key="6"/>
<gene>
    <name type="primary">scyl</name>
    <name type="ORF">CG7590</name>
</gene>
<keyword id="KW-0053">Apoptosis</keyword>
<keyword id="KW-0963">Cytoplasm</keyword>
<keyword id="KW-0217">Developmental protein</keyword>
<keyword id="KW-1185">Reference proteome</keyword>
<protein>
    <recommendedName>
        <fullName>Protein scylla</fullName>
    </recommendedName>
    <alternativeName>
        <fullName>Protein regulated in development and DNA damage response 2</fullName>
        <shortName>REDD-2</shortName>
    </alternativeName>
</protein>
<name>SCLLA_DROME</name>
<reference key="1">
    <citation type="submission" date="2000-01" db="EMBL/GenBank/DDBJ databases">
        <title>Characterization of charybde and scylla, two paralogous target genes of Hox and cofactors proteins in Drosophila.</title>
        <authorList>
            <person name="Chauvet S."/>
            <person name="Maurel-Zaffran C."/>
            <person name="Miassod R."/>
            <person name="Jullien N."/>
            <person name="Pradel J."/>
            <person name="Aragnol D."/>
        </authorList>
    </citation>
    <scope>NUCLEOTIDE SEQUENCE [MRNA]</scope>
</reference>
<reference key="2">
    <citation type="journal article" date="2000" name="Science">
        <title>The genome sequence of Drosophila melanogaster.</title>
        <authorList>
            <person name="Adams M.D."/>
            <person name="Celniker S.E."/>
            <person name="Holt R.A."/>
            <person name="Evans C.A."/>
            <person name="Gocayne J.D."/>
            <person name="Amanatides P.G."/>
            <person name="Scherer S.E."/>
            <person name="Li P.W."/>
            <person name="Hoskins R.A."/>
            <person name="Galle R.F."/>
            <person name="George R.A."/>
            <person name="Lewis S.E."/>
            <person name="Richards S."/>
            <person name="Ashburner M."/>
            <person name="Henderson S.N."/>
            <person name="Sutton G.G."/>
            <person name="Wortman J.R."/>
            <person name="Yandell M.D."/>
            <person name="Zhang Q."/>
            <person name="Chen L.X."/>
            <person name="Brandon R.C."/>
            <person name="Rogers Y.-H.C."/>
            <person name="Blazej R.G."/>
            <person name="Champe M."/>
            <person name="Pfeiffer B.D."/>
            <person name="Wan K.H."/>
            <person name="Doyle C."/>
            <person name="Baxter E.G."/>
            <person name="Helt G."/>
            <person name="Nelson C.R."/>
            <person name="Miklos G.L.G."/>
            <person name="Abril J.F."/>
            <person name="Agbayani A."/>
            <person name="An H.-J."/>
            <person name="Andrews-Pfannkoch C."/>
            <person name="Baldwin D."/>
            <person name="Ballew R.M."/>
            <person name="Basu A."/>
            <person name="Baxendale J."/>
            <person name="Bayraktaroglu L."/>
            <person name="Beasley E.M."/>
            <person name="Beeson K.Y."/>
            <person name="Benos P.V."/>
            <person name="Berman B.P."/>
            <person name="Bhandari D."/>
            <person name="Bolshakov S."/>
            <person name="Borkova D."/>
            <person name="Botchan M.R."/>
            <person name="Bouck J."/>
            <person name="Brokstein P."/>
            <person name="Brottier P."/>
            <person name="Burtis K.C."/>
            <person name="Busam D.A."/>
            <person name="Butler H."/>
            <person name="Cadieu E."/>
            <person name="Center A."/>
            <person name="Chandra I."/>
            <person name="Cherry J.M."/>
            <person name="Cawley S."/>
            <person name="Dahlke C."/>
            <person name="Davenport L.B."/>
            <person name="Davies P."/>
            <person name="de Pablos B."/>
            <person name="Delcher A."/>
            <person name="Deng Z."/>
            <person name="Mays A.D."/>
            <person name="Dew I."/>
            <person name="Dietz S.M."/>
            <person name="Dodson K."/>
            <person name="Doup L.E."/>
            <person name="Downes M."/>
            <person name="Dugan-Rocha S."/>
            <person name="Dunkov B.C."/>
            <person name="Dunn P."/>
            <person name="Durbin K.J."/>
            <person name="Evangelista C.C."/>
            <person name="Ferraz C."/>
            <person name="Ferriera S."/>
            <person name="Fleischmann W."/>
            <person name="Fosler C."/>
            <person name="Gabrielian A.E."/>
            <person name="Garg N.S."/>
            <person name="Gelbart W.M."/>
            <person name="Glasser K."/>
            <person name="Glodek A."/>
            <person name="Gong F."/>
            <person name="Gorrell J.H."/>
            <person name="Gu Z."/>
            <person name="Guan P."/>
            <person name="Harris M."/>
            <person name="Harris N.L."/>
            <person name="Harvey D.A."/>
            <person name="Heiman T.J."/>
            <person name="Hernandez J.R."/>
            <person name="Houck J."/>
            <person name="Hostin D."/>
            <person name="Houston K.A."/>
            <person name="Howland T.J."/>
            <person name="Wei M.-H."/>
            <person name="Ibegwam C."/>
            <person name="Jalali M."/>
            <person name="Kalush F."/>
            <person name="Karpen G.H."/>
            <person name="Ke Z."/>
            <person name="Kennison J.A."/>
            <person name="Ketchum K.A."/>
            <person name="Kimmel B.E."/>
            <person name="Kodira C.D."/>
            <person name="Kraft C.L."/>
            <person name="Kravitz S."/>
            <person name="Kulp D."/>
            <person name="Lai Z."/>
            <person name="Lasko P."/>
            <person name="Lei Y."/>
            <person name="Levitsky A.A."/>
            <person name="Li J.H."/>
            <person name="Li Z."/>
            <person name="Liang Y."/>
            <person name="Lin X."/>
            <person name="Liu X."/>
            <person name="Mattei B."/>
            <person name="McIntosh T.C."/>
            <person name="McLeod M.P."/>
            <person name="McPherson D."/>
            <person name="Merkulov G."/>
            <person name="Milshina N.V."/>
            <person name="Mobarry C."/>
            <person name="Morris J."/>
            <person name="Moshrefi A."/>
            <person name="Mount S.M."/>
            <person name="Moy M."/>
            <person name="Murphy B."/>
            <person name="Murphy L."/>
            <person name="Muzny D.M."/>
            <person name="Nelson D.L."/>
            <person name="Nelson D.R."/>
            <person name="Nelson K.A."/>
            <person name="Nixon K."/>
            <person name="Nusskern D.R."/>
            <person name="Pacleb J.M."/>
            <person name="Palazzolo M."/>
            <person name="Pittman G.S."/>
            <person name="Pan S."/>
            <person name="Pollard J."/>
            <person name="Puri V."/>
            <person name="Reese M.G."/>
            <person name="Reinert K."/>
            <person name="Remington K."/>
            <person name="Saunders R.D.C."/>
            <person name="Scheeler F."/>
            <person name="Shen H."/>
            <person name="Shue B.C."/>
            <person name="Siden-Kiamos I."/>
            <person name="Simpson M."/>
            <person name="Skupski M.P."/>
            <person name="Smith T.J."/>
            <person name="Spier E."/>
            <person name="Spradling A.C."/>
            <person name="Stapleton M."/>
            <person name="Strong R."/>
            <person name="Sun E."/>
            <person name="Svirskas R."/>
            <person name="Tector C."/>
            <person name="Turner R."/>
            <person name="Venter E."/>
            <person name="Wang A.H."/>
            <person name="Wang X."/>
            <person name="Wang Z.-Y."/>
            <person name="Wassarman D.A."/>
            <person name="Weinstock G.M."/>
            <person name="Weissenbach J."/>
            <person name="Williams S.M."/>
            <person name="Woodage T."/>
            <person name="Worley K.C."/>
            <person name="Wu D."/>
            <person name="Yang S."/>
            <person name="Yao Q.A."/>
            <person name="Ye J."/>
            <person name="Yeh R.-F."/>
            <person name="Zaveri J.S."/>
            <person name="Zhan M."/>
            <person name="Zhang G."/>
            <person name="Zhao Q."/>
            <person name="Zheng L."/>
            <person name="Zheng X.H."/>
            <person name="Zhong F.N."/>
            <person name="Zhong W."/>
            <person name="Zhou X."/>
            <person name="Zhu S.C."/>
            <person name="Zhu X."/>
            <person name="Smith H.O."/>
            <person name="Gibbs R.A."/>
            <person name="Myers E.W."/>
            <person name="Rubin G.M."/>
            <person name="Venter J.C."/>
        </authorList>
    </citation>
    <scope>NUCLEOTIDE SEQUENCE [LARGE SCALE GENOMIC DNA]</scope>
    <source>
        <strain>Berkeley</strain>
    </source>
</reference>
<reference key="3">
    <citation type="journal article" date="2002" name="Genome Biol.">
        <title>Annotation of the Drosophila melanogaster euchromatic genome: a systematic review.</title>
        <authorList>
            <person name="Misra S."/>
            <person name="Crosby M.A."/>
            <person name="Mungall C.J."/>
            <person name="Matthews B.B."/>
            <person name="Campbell K.S."/>
            <person name="Hradecky P."/>
            <person name="Huang Y."/>
            <person name="Kaminker J.S."/>
            <person name="Millburn G.H."/>
            <person name="Prochnik S.E."/>
            <person name="Smith C.D."/>
            <person name="Tupy J.L."/>
            <person name="Whitfield E.J."/>
            <person name="Bayraktaroglu L."/>
            <person name="Berman B.P."/>
            <person name="Bettencourt B.R."/>
            <person name="Celniker S.E."/>
            <person name="de Grey A.D.N.J."/>
            <person name="Drysdale R.A."/>
            <person name="Harris N.L."/>
            <person name="Richter J."/>
            <person name="Russo S."/>
            <person name="Schroeder A.J."/>
            <person name="Shu S.Q."/>
            <person name="Stapleton M."/>
            <person name="Yamada C."/>
            <person name="Ashburner M."/>
            <person name="Gelbart W.M."/>
            <person name="Rubin G.M."/>
            <person name="Lewis S.E."/>
        </authorList>
    </citation>
    <scope>GENOME REANNOTATION</scope>
    <source>
        <strain>Berkeley</strain>
    </source>
</reference>
<reference key="4">
    <citation type="journal article" date="2002" name="Genome Biol.">
        <title>A Drosophila full-length cDNA resource.</title>
        <authorList>
            <person name="Stapleton M."/>
            <person name="Carlson J.W."/>
            <person name="Brokstein P."/>
            <person name="Yu C."/>
            <person name="Champe M."/>
            <person name="George R.A."/>
            <person name="Guarin H."/>
            <person name="Kronmiller B."/>
            <person name="Pacleb J.M."/>
            <person name="Park S."/>
            <person name="Wan K.H."/>
            <person name="Rubin G.M."/>
            <person name="Celniker S.E."/>
        </authorList>
    </citation>
    <scope>NUCLEOTIDE SEQUENCE [LARGE SCALE MRNA]</scope>
    <source>
        <strain>Berkeley</strain>
        <tissue>Embryo</tissue>
    </source>
</reference>
<reference key="5">
    <citation type="submission" date="2009-01" db="EMBL/GenBank/DDBJ databases">
        <authorList>
            <person name="Carlson J.W."/>
            <person name="Booth B."/>
            <person name="Frise E."/>
            <person name="Park S."/>
            <person name="Wan K.H."/>
            <person name="Yu C."/>
            <person name="Celniker S.E."/>
        </authorList>
    </citation>
    <scope>NUCLEOTIDE SEQUENCE [LARGE SCALE MRNA]</scope>
    <source>
        <strain>Berkeley</strain>
    </source>
</reference>
<reference key="6">
    <citation type="journal article" date="2002" name="Mol. Cell">
        <title>REDD1, a developmentally regulated transcriptional target of p63 and p53, links p63 to regulation of reactive oxygen species.</title>
        <authorList>
            <person name="Ellisen L.W."/>
            <person name="Ramsayer K.D."/>
            <person name="Johannessen C.M."/>
            <person name="Yang A."/>
            <person name="Beppu H."/>
            <person name="Minda K."/>
            <person name="Oliner J.D."/>
            <person name="McKeon F."/>
            <person name="Haber D.A."/>
        </authorList>
    </citation>
    <scope>IDENTIFICATION</scope>
</reference>
<reference key="7">
    <citation type="journal article" date="2004" name="Genes Dev.">
        <title>The hypoxia-induced paralogs Scylla and Charybdis inhibit growth by down-regulating S6K activity upstream of TSC in Drosophila.</title>
        <authorList>
            <person name="Reiling J.H."/>
            <person name="Hafen E."/>
        </authorList>
    </citation>
    <scope>FUNCTION</scope>
    <scope>INDUCTION</scope>
</reference>
<reference key="8">
    <citation type="journal article" date="2005" name="J. Biol. Chem.">
        <title>The stress-inducted proteins RTP801 and RTP801L are negative regulators of the mammalian target of rapamycin pathway.</title>
        <authorList>
            <person name="Corradetti M.N."/>
            <person name="Inoki K."/>
            <person name="Guan K.-L."/>
        </authorList>
    </citation>
    <scope>FUNCTION</scope>
</reference>
<reference key="9">
    <citation type="journal article" date="2006" name="Dev. Biol.">
        <title>scylla and charybde, homologues of the human apoptotic gene RTP801, are required for head involution in Drosophila.</title>
        <authorList>
            <person name="Scuderi A."/>
            <person name="Simin K."/>
            <person name="Kazuko S.G."/>
            <person name="Metherall J.E."/>
            <person name="Letsou A."/>
        </authorList>
    </citation>
    <scope>FUNCTION</scope>
    <scope>INDUCTION</scope>
    <scope>DEVELOPMENTAL STAGE</scope>
</reference>
<sequence length="280" mass="30762">MKMDVIAREQIIYGSLQGSNKNKDWTSRLPPPSAYTLDLMSKKAKTTTGGSSNGSNATATSTTTSTSSSIKHKQPAGSSNNNVGQSQSKKTKPSGSYNSNSNYYYYAADEEEGGSADYALSNYDKKAVEELSLRLLDELRAAKSRHLTCTEVSLPCDLTPSVAREIIRVSEKEPRGIRGCTIYIEFEDEPKNSRRIASIKVDSDTVSTFEVYLTLRQDHRGWTSLLPQFMKSLARTITISPEYTITKNKLYSADGLGARRSYSFGSHAHRPSAAIATPTN</sequence>
<comment type="function">
    <text evidence="3 4 5">Inhibits cell growth by regulating the Tor pathway upstream of the Tsc1-Tsc2 complex and downstream of Akt1. Acts as a cell death activator during head development.</text>
</comment>
<comment type="subcellular location">
    <subcellularLocation>
        <location evidence="1">Cytoplasm</location>
    </subcellularLocation>
</comment>
<comment type="developmental stage">
    <text evidence="5">Expression peaks 2-8 hours after egg laying. Expressed in the dorsal domains of gastrulation stage embryos. During mid-embryonic developmental stages, expressed in the central nervous system, the three thoracic segments and the cardiac precursor cells.</text>
</comment>
<comment type="induction">
    <text evidence="3 5">Expression is controlled by homeobox transcription factors. At larval stages, induced by starvation, and by hypoxia in midgut and fat body.</text>
</comment>
<comment type="similarity">
    <text evidence="6">Belongs to the DDIT4 family.</text>
</comment>
<comment type="sequence caution" evidence="6">
    <conflict type="miscellaneous discrepancy">
        <sequence resource="EMBL-CDS" id="AAL68220"/>
    </conflict>
    <text>Intron retention.</text>
</comment>